<reference key="1">
    <citation type="journal article" date="2006" name="Proc. Natl. Acad. Sci. U.S.A.">
        <title>Comparative genomics of the lactic acid bacteria.</title>
        <authorList>
            <person name="Makarova K.S."/>
            <person name="Slesarev A."/>
            <person name="Wolf Y.I."/>
            <person name="Sorokin A."/>
            <person name="Mirkin B."/>
            <person name="Koonin E.V."/>
            <person name="Pavlov A."/>
            <person name="Pavlova N."/>
            <person name="Karamychev V."/>
            <person name="Polouchine N."/>
            <person name="Shakhova V."/>
            <person name="Grigoriev I."/>
            <person name="Lou Y."/>
            <person name="Rohksar D."/>
            <person name="Lucas S."/>
            <person name="Huang K."/>
            <person name="Goodstein D.M."/>
            <person name="Hawkins T."/>
            <person name="Plengvidhya V."/>
            <person name="Welker D."/>
            <person name="Hughes J."/>
            <person name="Goh Y."/>
            <person name="Benson A."/>
            <person name="Baldwin K."/>
            <person name="Lee J.-H."/>
            <person name="Diaz-Muniz I."/>
            <person name="Dosti B."/>
            <person name="Smeianov V."/>
            <person name="Wechter W."/>
            <person name="Barabote R."/>
            <person name="Lorca G."/>
            <person name="Altermann E."/>
            <person name="Barrangou R."/>
            <person name="Ganesan B."/>
            <person name="Xie Y."/>
            <person name="Rawsthorne H."/>
            <person name="Tamir D."/>
            <person name="Parker C."/>
            <person name="Breidt F."/>
            <person name="Broadbent J.R."/>
            <person name="Hutkins R."/>
            <person name="O'Sullivan D."/>
            <person name="Steele J."/>
            <person name="Unlu G."/>
            <person name="Saier M.H. Jr."/>
            <person name="Klaenhammer T."/>
            <person name="Richardson P."/>
            <person name="Kozyavkin S."/>
            <person name="Weimer B.C."/>
            <person name="Mills D.A."/>
        </authorList>
    </citation>
    <scope>NUCLEOTIDE SEQUENCE [LARGE SCALE GENOMIC DNA]</scope>
    <source>
        <strain>ATCC BAA-491 / LMD-9</strain>
    </source>
</reference>
<dbReference type="EC" id="6.1.1.7" evidence="1"/>
<dbReference type="EMBL" id="CP000419">
    <property type="protein sequence ID" value="ABJ65774.1"/>
    <property type="molecule type" value="Genomic_DNA"/>
</dbReference>
<dbReference type="RefSeq" id="WP_011680822.1">
    <property type="nucleotide sequence ID" value="NC_008532.1"/>
</dbReference>
<dbReference type="SMR" id="Q03LZ8"/>
<dbReference type="KEGG" id="ste:STER_0493"/>
<dbReference type="HOGENOM" id="CLU_004485_1_1_9"/>
<dbReference type="GO" id="GO:0005829">
    <property type="term" value="C:cytosol"/>
    <property type="evidence" value="ECO:0007669"/>
    <property type="project" value="TreeGrafter"/>
</dbReference>
<dbReference type="GO" id="GO:0004813">
    <property type="term" value="F:alanine-tRNA ligase activity"/>
    <property type="evidence" value="ECO:0007669"/>
    <property type="project" value="UniProtKB-UniRule"/>
</dbReference>
<dbReference type="GO" id="GO:0002161">
    <property type="term" value="F:aminoacyl-tRNA deacylase activity"/>
    <property type="evidence" value="ECO:0007669"/>
    <property type="project" value="TreeGrafter"/>
</dbReference>
<dbReference type="GO" id="GO:0005524">
    <property type="term" value="F:ATP binding"/>
    <property type="evidence" value="ECO:0007669"/>
    <property type="project" value="UniProtKB-UniRule"/>
</dbReference>
<dbReference type="GO" id="GO:0140096">
    <property type="term" value="F:catalytic activity, acting on a protein"/>
    <property type="evidence" value="ECO:0007669"/>
    <property type="project" value="UniProtKB-ARBA"/>
</dbReference>
<dbReference type="GO" id="GO:0016740">
    <property type="term" value="F:transferase activity"/>
    <property type="evidence" value="ECO:0007669"/>
    <property type="project" value="UniProtKB-ARBA"/>
</dbReference>
<dbReference type="GO" id="GO:0000049">
    <property type="term" value="F:tRNA binding"/>
    <property type="evidence" value="ECO:0007669"/>
    <property type="project" value="UniProtKB-KW"/>
</dbReference>
<dbReference type="GO" id="GO:0008270">
    <property type="term" value="F:zinc ion binding"/>
    <property type="evidence" value="ECO:0007669"/>
    <property type="project" value="UniProtKB-UniRule"/>
</dbReference>
<dbReference type="GO" id="GO:0006419">
    <property type="term" value="P:alanyl-tRNA aminoacylation"/>
    <property type="evidence" value="ECO:0007669"/>
    <property type="project" value="UniProtKB-UniRule"/>
</dbReference>
<dbReference type="CDD" id="cd00673">
    <property type="entry name" value="AlaRS_core"/>
    <property type="match status" value="1"/>
</dbReference>
<dbReference type="FunFam" id="3.10.310.40:FF:000001">
    <property type="entry name" value="Alanine--tRNA ligase"/>
    <property type="match status" value="1"/>
</dbReference>
<dbReference type="FunFam" id="3.30.54.20:FF:000001">
    <property type="entry name" value="Alanine--tRNA ligase"/>
    <property type="match status" value="1"/>
</dbReference>
<dbReference type="FunFam" id="3.30.930.10:FF:000046">
    <property type="entry name" value="Alanine--tRNA ligase"/>
    <property type="match status" value="1"/>
</dbReference>
<dbReference type="FunFam" id="3.30.980.10:FF:000004">
    <property type="entry name" value="Alanine--tRNA ligase, cytoplasmic"/>
    <property type="match status" value="1"/>
</dbReference>
<dbReference type="Gene3D" id="2.40.30.130">
    <property type="match status" value="1"/>
</dbReference>
<dbReference type="Gene3D" id="3.10.310.40">
    <property type="match status" value="1"/>
</dbReference>
<dbReference type="Gene3D" id="3.30.54.20">
    <property type="match status" value="1"/>
</dbReference>
<dbReference type="Gene3D" id="6.10.250.550">
    <property type="match status" value="1"/>
</dbReference>
<dbReference type="Gene3D" id="3.30.930.10">
    <property type="entry name" value="Bira Bifunctional Protein, Domain 2"/>
    <property type="match status" value="1"/>
</dbReference>
<dbReference type="Gene3D" id="3.30.980.10">
    <property type="entry name" value="Threonyl-trna Synthetase, Chain A, domain 2"/>
    <property type="match status" value="1"/>
</dbReference>
<dbReference type="HAMAP" id="MF_00036_B">
    <property type="entry name" value="Ala_tRNA_synth_B"/>
    <property type="match status" value="1"/>
</dbReference>
<dbReference type="InterPro" id="IPR045864">
    <property type="entry name" value="aa-tRNA-synth_II/BPL/LPL"/>
</dbReference>
<dbReference type="InterPro" id="IPR002318">
    <property type="entry name" value="Ala-tRNA-lgiase_IIc"/>
</dbReference>
<dbReference type="InterPro" id="IPR018162">
    <property type="entry name" value="Ala-tRNA-ligase_IIc_anticod-bd"/>
</dbReference>
<dbReference type="InterPro" id="IPR018165">
    <property type="entry name" value="Ala-tRNA-synth_IIc_core"/>
</dbReference>
<dbReference type="InterPro" id="IPR018164">
    <property type="entry name" value="Ala-tRNA-synth_IIc_N"/>
</dbReference>
<dbReference type="InterPro" id="IPR050058">
    <property type="entry name" value="Ala-tRNA_ligase"/>
</dbReference>
<dbReference type="InterPro" id="IPR023033">
    <property type="entry name" value="Ala_tRNA_ligase_euk/bac"/>
</dbReference>
<dbReference type="InterPro" id="IPR003156">
    <property type="entry name" value="DHHA1_dom"/>
</dbReference>
<dbReference type="InterPro" id="IPR018163">
    <property type="entry name" value="Thr/Ala-tRNA-synth_IIc_edit"/>
</dbReference>
<dbReference type="InterPro" id="IPR009000">
    <property type="entry name" value="Transl_B-barrel_sf"/>
</dbReference>
<dbReference type="InterPro" id="IPR012947">
    <property type="entry name" value="tRNA_SAD"/>
</dbReference>
<dbReference type="NCBIfam" id="TIGR00344">
    <property type="entry name" value="alaS"/>
    <property type="match status" value="1"/>
</dbReference>
<dbReference type="PANTHER" id="PTHR11777:SF9">
    <property type="entry name" value="ALANINE--TRNA LIGASE, CYTOPLASMIC"/>
    <property type="match status" value="1"/>
</dbReference>
<dbReference type="PANTHER" id="PTHR11777">
    <property type="entry name" value="ALANYL-TRNA SYNTHETASE"/>
    <property type="match status" value="1"/>
</dbReference>
<dbReference type="Pfam" id="PF02272">
    <property type="entry name" value="DHHA1"/>
    <property type="match status" value="1"/>
</dbReference>
<dbReference type="Pfam" id="PF01411">
    <property type="entry name" value="tRNA-synt_2c"/>
    <property type="match status" value="1"/>
</dbReference>
<dbReference type="Pfam" id="PF07973">
    <property type="entry name" value="tRNA_SAD"/>
    <property type="match status" value="1"/>
</dbReference>
<dbReference type="PRINTS" id="PR00980">
    <property type="entry name" value="TRNASYNTHALA"/>
</dbReference>
<dbReference type="SMART" id="SM00863">
    <property type="entry name" value="tRNA_SAD"/>
    <property type="match status" value="1"/>
</dbReference>
<dbReference type="SUPFAM" id="SSF55681">
    <property type="entry name" value="Class II aaRS and biotin synthetases"/>
    <property type="match status" value="1"/>
</dbReference>
<dbReference type="SUPFAM" id="SSF101353">
    <property type="entry name" value="Putative anticodon-binding domain of alanyl-tRNA synthetase (AlaRS)"/>
    <property type="match status" value="1"/>
</dbReference>
<dbReference type="SUPFAM" id="SSF55186">
    <property type="entry name" value="ThrRS/AlaRS common domain"/>
    <property type="match status" value="1"/>
</dbReference>
<dbReference type="SUPFAM" id="SSF50447">
    <property type="entry name" value="Translation proteins"/>
    <property type="match status" value="1"/>
</dbReference>
<dbReference type="PROSITE" id="PS50860">
    <property type="entry name" value="AA_TRNA_LIGASE_II_ALA"/>
    <property type="match status" value="1"/>
</dbReference>
<evidence type="ECO:0000255" key="1">
    <source>
        <dbReference type="HAMAP-Rule" id="MF_00036"/>
    </source>
</evidence>
<gene>
    <name evidence="1" type="primary">alaS</name>
    <name type="ordered locus">STER_0493</name>
</gene>
<feature type="chain" id="PRO_0000347830" description="Alanine--tRNA ligase">
    <location>
        <begin position="1"/>
        <end position="872"/>
    </location>
</feature>
<feature type="binding site" evidence="1">
    <location>
        <position position="567"/>
    </location>
    <ligand>
        <name>Zn(2+)</name>
        <dbReference type="ChEBI" id="CHEBI:29105"/>
    </ligand>
</feature>
<feature type="binding site" evidence="1">
    <location>
        <position position="571"/>
    </location>
    <ligand>
        <name>Zn(2+)</name>
        <dbReference type="ChEBI" id="CHEBI:29105"/>
    </ligand>
</feature>
<feature type="binding site" evidence="1">
    <location>
        <position position="669"/>
    </location>
    <ligand>
        <name>Zn(2+)</name>
        <dbReference type="ChEBI" id="CHEBI:29105"/>
    </ligand>
</feature>
<feature type="binding site" evidence="1">
    <location>
        <position position="673"/>
    </location>
    <ligand>
        <name>Zn(2+)</name>
        <dbReference type="ChEBI" id="CHEBI:29105"/>
    </ligand>
</feature>
<sequence length="872" mass="96673">MKQLTSAQIRQMWLDFWKSKGHAVEPSANLVPVNDPTLLWINSGVATLKKYFDGSVIPENPRITNSQKAIRTNDIENVGKTARHHTMFEMLGNFSVGDYFRDEAIEWGYELLTSPEWFDLPKDKLYMTYYPDDKDSYNRWIACGVEPSHLIPIEDNFWEIGAGPSGPDTEIFFDRGEEFDPDNIGIRLLEEDIENDRYIEIWNIVLSQFNADPAVPRSEYKELPNKNIDTGAGLERLAAVMQGAKTNFETDLFMPIIREIEKMSGKAYDPDGETLSFKVIADHIRSLAFAIGDGALPGNEGRGYVLRRLLRRAVMHGRRLGISDAFLYKLVPTVGQIMESYYPEVLEKKDFIEKIVKREEETFARTIDAGSSMLDELLANLKKSGKDTLEGKDIFKLYDTYGFPVELTEELAEDEGFKIDHEGFKAAMKEQQDRARASVVKGGSMGMQNETLANITEPSEFLYEAETAESRLSVIVADDARHDSVNSGQALLVFEQTPFYAEMGGQVADHGTISDAAGTTVARVVDVQRAPNGQALHTVEVEGELVVGANYKLEIDHSRRHRVMKNHTATHLLHAALHNIVGNHAVQAGSLNEQEFLRFDFTHFEAVTPEELRAIEEQVNEEIWKATPVTTIETDIDTAKSMGAMALFGEKYGKRVRVVSIGDYSVELCGGTHVANTAEIGMFKIVKEEGIGSGTRRILAVTSREAYLAYREEEDALKSIAATLKAPQLKEVPNKVASLQEQLHALQKENATLKEKAAAAAAGDVFKDVKEANGVRYIASQVEVSDAGALRTFADQWKQADYSDVLVLAAHIREKVNVLVASKSENVHAGNLIKVLAPIVSGRGGGKPNMAMAGGSDANSIQDLLSAVAEQF</sequence>
<organism>
    <name type="scientific">Streptococcus thermophilus (strain ATCC BAA-491 / LMD-9)</name>
    <dbReference type="NCBI Taxonomy" id="322159"/>
    <lineage>
        <taxon>Bacteria</taxon>
        <taxon>Bacillati</taxon>
        <taxon>Bacillota</taxon>
        <taxon>Bacilli</taxon>
        <taxon>Lactobacillales</taxon>
        <taxon>Streptococcaceae</taxon>
        <taxon>Streptococcus</taxon>
    </lineage>
</organism>
<accession>Q03LZ8</accession>
<protein>
    <recommendedName>
        <fullName evidence="1">Alanine--tRNA ligase</fullName>
        <ecNumber evidence="1">6.1.1.7</ecNumber>
    </recommendedName>
    <alternativeName>
        <fullName evidence="1">Alanyl-tRNA synthetase</fullName>
        <shortName evidence="1">AlaRS</shortName>
    </alternativeName>
</protein>
<name>SYA_STRTD</name>
<comment type="function">
    <text evidence="1">Catalyzes the attachment of alanine to tRNA(Ala) in a two-step reaction: alanine is first activated by ATP to form Ala-AMP and then transferred to the acceptor end of tRNA(Ala). Also edits incorrectly charged Ser-tRNA(Ala) and Gly-tRNA(Ala) via its editing domain.</text>
</comment>
<comment type="catalytic activity">
    <reaction evidence="1">
        <text>tRNA(Ala) + L-alanine + ATP = L-alanyl-tRNA(Ala) + AMP + diphosphate</text>
        <dbReference type="Rhea" id="RHEA:12540"/>
        <dbReference type="Rhea" id="RHEA-COMP:9657"/>
        <dbReference type="Rhea" id="RHEA-COMP:9923"/>
        <dbReference type="ChEBI" id="CHEBI:30616"/>
        <dbReference type="ChEBI" id="CHEBI:33019"/>
        <dbReference type="ChEBI" id="CHEBI:57972"/>
        <dbReference type="ChEBI" id="CHEBI:78442"/>
        <dbReference type="ChEBI" id="CHEBI:78497"/>
        <dbReference type="ChEBI" id="CHEBI:456215"/>
        <dbReference type="EC" id="6.1.1.7"/>
    </reaction>
</comment>
<comment type="cofactor">
    <cofactor evidence="1">
        <name>Zn(2+)</name>
        <dbReference type="ChEBI" id="CHEBI:29105"/>
    </cofactor>
    <text evidence="1">Binds 1 zinc ion per subunit.</text>
</comment>
<comment type="subcellular location">
    <subcellularLocation>
        <location evidence="1">Cytoplasm</location>
    </subcellularLocation>
</comment>
<comment type="domain">
    <text evidence="1">Consists of three domains; the N-terminal catalytic domain, the editing domain and the C-terminal C-Ala domain. The editing domain removes incorrectly charged amino acids, while the C-Ala domain, along with tRNA(Ala), serves as a bridge to cooperatively bring together the editing and aminoacylation centers thus stimulating deacylation of misacylated tRNAs.</text>
</comment>
<comment type="similarity">
    <text evidence="1">Belongs to the class-II aminoacyl-tRNA synthetase family.</text>
</comment>
<keyword id="KW-0030">Aminoacyl-tRNA synthetase</keyword>
<keyword id="KW-0067">ATP-binding</keyword>
<keyword id="KW-0963">Cytoplasm</keyword>
<keyword id="KW-0436">Ligase</keyword>
<keyword id="KW-0479">Metal-binding</keyword>
<keyword id="KW-0547">Nucleotide-binding</keyword>
<keyword id="KW-0648">Protein biosynthesis</keyword>
<keyword id="KW-0694">RNA-binding</keyword>
<keyword id="KW-0820">tRNA-binding</keyword>
<keyword id="KW-0862">Zinc</keyword>
<proteinExistence type="inferred from homology"/>